<protein>
    <recommendedName>
        <fullName evidence="2">Trehalase</fullName>
        <ecNumber evidence="1">3.2.1.28</ecNumber>
    </recommendedName>
    <alternativeName>
        <fullName evidence="3">Alpha,alpha-trehalase</fullName>
    </alternativeName>
</protein>
<evidence type="ECO:0000269" key="1">
    <source>
    </source>
</evidence>
<evidence type="ECO:0000303" key="2">
    <source>
    </source>
</evidence>
<evidence type="ECO:0000305" key="3"/>
<evidence type="ECO:0000312" key="4">
    <source>
        <dbReference type="EMBL" id="CAC11431.1"/>
    </source>
</evidence>
<reference key="1">
    <citation type="journal article" date="2000" name="Nature">
        <title>The genome sequence of the thermoacidophilic scavenger Thermoplasma acidophilum.</title>
        <authorList>
            <person name="Ruepp A."/>
            <person name="Graml W."/>
            <person name="Santos-Martinez M.-L."/>
            <person name="Koretke K.K."/>
            <person name="Volker C."/>
            <person name="Mewes H.-W."/>
            <person name="Frishman D."/>
            <person name="Stocker S."/>
            <person name="Lupas A.N."/>
            <person name="Baumeister W."/>
        </authorList>
    </citation>
    <scope>NUCLEOTIDE SEQUENCE [LARGE SCALE GENOMIC DNA]</scope>
    <source>
        <strain>ATCC 25905 / DSM 1728 / JCM 9062 / NBRC 15155 / AMRC-C165</strain>
    </source>
</reference>
<reference key="2">
    <citation type="journal article" date="2015" name="Appl. Environ. Microbiol.">
        <title>Identification of GH15 family thermophilic archaeal trehalases that function within a narrow acidic-pH range.</title>
        <authorList>
            <person name="Sakaguchi M."/>
            <person name="Shimodaira S."/>
            <person name="Ishida S.N."/>
            <person name="Amemiya M."/>
            <person name="Honda S."/>
            <person name="Sugahara Y."/>
            <person name="Oyama F."/>
            <person name="Kawakita M."/>
        </authorList>
    </citation>
    <scope>FUNCTION</scope>
    <scope>CATALYTIC ACTIVITY</scope>
    <scope>ACTIVITY REGULATION</scope>
    <scope>BIOPHYSICOCHEMICAL PROPERTIES</scope>
    <scope>SUBUNIT</scope>
    <source>
        <strain>ATCC 25905 / DSM 1728 / JCM 9062 / NBRC 15155 / AMRC-C165</strain>
    </source>
</reference>
<dbReference type="EC" id="3.2.1.28" evidence="1"/>
<dbReference type="EMBL" id="AL445063">
    <property type="protein sequence ID" value="CAC11431.1"/>
    <property type="molecule type" value="Genomic_DNA"/>
</dbReference>
<dbReference type="SMR" id="Q9HLE2"/>
<dbReference type="FunCoup" id="Q9HLE2">
    <property type="interactions" value="1"/>
</dbReference>
<dbReference type="STRING" id="273075.gene:9571503"/>
<dbReference type="CAZy" id="GH15">
    <property type="family name" value="Glycoside Hydrolase Family 15"/>
</dbReference>
<dbReference type="PaxDb" id="273075-Ta0286m"/>
<dbReference type="DNASU" id="1456992"/>
<dbReference type="EnsemblBacteria" id="CAC11431">
    <property type="protein sequence ID" value="CAC11431"/>
    <property type="gene ID" value="CAC11431"/>
</dbReference>
<dbReference type="KEGG" id="tac:Ta0286"/>
<dbReference type="eggNOG" id="arCOG03286">
    <property type="taxonomic scope" value="Archaea"/>
</dbReference>
<dbReference type="HOGENOM" id="CLU_010399_2_0_2"/>
<dbReference type="InParanoid" id="Q9HLE2"/>
<dbReference type="UniPathway" id="UPA00300">
    <property type="reaction ID" value="UER00535"/>
</dbReference>
<dbReference type="Proteomes" id="UP000001024">
    <property type="component" value="Chromosome"/>
</dbReference>
<dbReference type="GO" id="GO:0004555">
    <property type="term" value="F:alpha,alpha-trehalase activity"/>
    <property type="evidence" value="ECO:0007669"/>
    <property type="project" value="UniProtKB-EC"/>
</dbReference>
<dbReference type="GO" id="GO:0005993">
    <property type="term" value="P:trehalose catabolic process"/>
    <property type="evidence" value="ECO:0007669"/>
    <property type="project" value="UniProtKB-UniPathway"/>
</dbReference>
<dbReference type="Gene3D" id="1.50.10.10">
    <property type="match status" value="1"/>
</dbReference>
<dbReference type="InterPro" id="IPR008928">
    <property type="entry name" value="6-hairpin_glycosidase_sf"/>
</dbReference>
<dbReference type="InterPro" id="IPR012341">
    <property type="entry name" value="6hp_glycosidase-like_sf"/>
</dbReference>
<dbReference type="InterPro" id="IPR011613">
    <property type="entry name" value="GH15-like"/>
</dbReference>
<dbReference type="InterPro" id="IPR045582">
    <property type="entry name" value="Trehalase-like_N"/>
</dbReference>
<dbReference type="PANTHER" id="PTHR31616:SF0">
    <property type="entry name" value="GLUCAN 1,4-ALPHA-GLUCOSIDASE"/>
    <property type="match status" value="1"/>
</dbReference>
<dbReference type="PANTHER" id="PTHR31616">
    <property type="entry name" value="TREHALASE"/>
    <property type="match status" value="1"/>
</dbReference>
<dbReference type="Pfam" id="PF00723">
    <property type="entry name" value="Glyco_hydro_15"/>
    <property type="match status" value="1"/>
</dbReference>
<dbReference type="Pfam" id="PF19291">
    <property type="entry name" value="TREH_N"/>
    <property type="match status" value="1"/>
</dbReference>
<dbReference type="SUPFAM" id="SSF48208">
    <property type="entry name" value="Six-hairpin glycosidases"/>
    <property type="match status" value="1"/>
</dbReference>
<accession>Q9HLE2</accession>
<sequence>MLVAMNGFIDWGCLPNFNSPAVFSSILDKKKGGYFAIYPTDTHDLYVDQYYKELTNILVTEFIKNGKVILRTTDFMPDSEYGKISFPEVHRFVETFSDPVRITIDFKPAFNYATERPLIQRVQHGFIFSTEKENMGISTEFQLKKNADHVFADVDMEPRSSSWVIALYGIHHLYRPTDYKSYLRLQETTDYWRKWASNSTYSGMYHSMVMRSALALKVLFYEPTGMMVAAPTASLPEAIGGERNWDYRYTWIRDTAYVIEALATIGYKREAVSFLYDMMDVISRENKIRTIYSIDNSDDFVERELDFEGYRGSRPVRIGNKAVDQLQIDQYGSIVRAIHAMEKAGGVVNSYLWDFVEEMMAKIEYLWKYPDSSIWEFRTEPKQYVYSKVMSWAAFDSAITMARDLGLTAPIKKWKGIQDEIWNDVMTKGFDPQTNSFVQYYGSKNVDASLLRLPILGFIPANDERFIGTMKRIEDELMVDGYLFRRYREDDGLKGDEGSFLMLTFWYIEDLILMKRLKAARAALESIIEKANHLGLYSEEIDEKTGDFLGNFPQALSHLGIIRVAPKLEEAFLKRVSKINE</sequence>
<gene>
    <name evidence="4" type="ordered locus">Ta0286</name>
</gene>
<organism>
    <name type="scientific">Thermoplasma acidophilum (strain ATCC 25905 / DSM 1728 / JCM 9062 / NBRC 15155 / AMRC-C165)</name>
    <dbReference type="NCBI Taxonomy" id="273075"/>
    <lineage>
        <taxon>Archaea</taxon>
        <taxon>Methanobacteriati</taxon>
        <taxon>Thermoplasmatota</taxon>
        <taxon>Thermoplasmata</taxon>
        <taxon>Thermoplasmatales</taxon>
        <taxon>Thermoplasmataceae</taxon>
        <taxon>Thermoplasma</taxon>
    </lineage>
</organism>
<proteinExistence type="evidence at protein level"/>
<feature type="chain" id="PRO_0000448960" description="Trehalase">
    <location>
        <begin position="1"/>
        <end position="581"/>
    </location>
</feature>
<comment type="function">
    <text evidence="1">Catalyzes the hydrolysis of alpha,alpha-trehalose into two molecules of D-glucose.</text>
</comment>
<comment type="catalytic activity">
    <reaction evidence="1">
        <text>alpha,alpha-trehalose + H2O = alpha-D-glucose + beta-D-glucose</text>
        <dbReference type="Rhea" id="RHEA:32675"/>
        <dbReference type="ChEBI" id="CHEBI:15377"/>
        <dbReference type="ChEBI" id="CHEBI:15903"/>
        <dbReference type="ChEBI" id="CHEBI:16551"/>
        <dbReference type="ChEBI" id="CHEBI:17925"/>
        <dbReference type="EC" id="3.2.1.28"/>
    </reaction>
</comment>
<comment type="activity regulation">
    <text evidence="1">Inhibited by validamycin A.</text>
</comment>
<comment type="biophysicochemical properties">
    <kinetics>
        <KM evidence="1">40.2 mM for trehalose</KM>
        <text evidence="1">kcat is 66.7 sec(-1).</text>
    </kinetics>
    <phDependence>
        <text evidence="1">Optimum pH is 3.7. Active within a narrow range of acidic pH values (pH 3.2 to 3.9).</text>
    </phDependence>
    <temperatureDependence>
        <text evidence="1">Optimum temperature is 50 degrees Celsius.</text>
    </temperatureDependence>
</comment>
<comment type="pathway">
    <text evidence="3">Glycan degradation; trehalose degradation; D-glucose from alpha,alpha-trehalose: step 1/1.</text>
</comment>
<comment type="subunit">
    <text evidence="1">Monomer.</text>
</comment>
<comment type="similarity">
    <text evidence="3">Belongs to the glycosyl hydrolase 15 family.</text>
</comment>
<name>TREH_THEAC</name>
<keyword id="KW-0119">Carbohydrate metabolism</keyword>
<keyword id="KW-0326">Glycosidase</keyword>
<keyword id="KW-0378">Hydrolase</keyword>
<keyword id="KW-1185">Reference proteome</keyword>